<reference key="1">
    <citation type="journal article" date="1996" name="Science">
        <title>Complete genome sequence of the methanogenic archaeon, Methanococcus jannaschii.</title>
        <authorList>
            <person name="Bult C.J."/>
            <person name="White O."/>
            <person name="Olsen G.J."/>
            <person name="Zhou L."/>
            <person name="Fleischmann R.D."/>
            <person name="Sutton G.G."/>
            <person name="Blake J.A."/>
            <person name="FitzGerald L.M."/>
            <person name="Clayton R.A."/>
            <person name="Gocayne J.D."/>
            <person name="Kerlavage A.R."/>
            <person name="Dougherty B.A."/>
            <person name="Tomb J.-F."/>
            <person name="Adams M.D."/>
            <person name="Reich C.I."/>
            <person name="Overbeek R."/>
            <person name="Kirkness E.F."/>
            <person name="Weinstock K.G."/>
            <person name="Merrick J.M."/>
            <person name="Glodek A."/>
            <person name="Scott J.L."/>
            <person name="Geoghagen N.S.M."/>
            <person name="Weidman J.F."/>
            <person name="Fuhrmann J.L."/>
            <person name="Nguyen D."/>
            <person name="Utterback T.R."/>
            <person name="Kelley J.M."/>
            <person name="Peterson J.D."/>
            <person name="Sadow P.W."/>
            <person name="Hanna M.C."/>
            <person name="Cotton M.D."/>
            <person name="Roberts K.M."/>
            <person name="Hurst M.A."/>
            <person name="Kaine B.P."/>
            <person name="Borodovsky M."/>
            <person name="Klenk H.-P."/>
            <person name="Fraser C.M."/>
            <person name="Smith H.O."/>
            <person name="Woese C.R."/>
            <person name="Venter J.C."/>
        </authorList>
    </citation>
    <scope>NUCLEOTIDE SEQUENCE [LARGE SCALE GENOMIC DNA]</scope>
    <source>
        <strain>ATCC 43067 / DSM 2661 / JAL-1 / JCM 10045 / NBRC 100440</strain>
    </source>
</reference>
<accession>Q57766</accession>
<keyword id="KW-0012">Acyltransferase</keyword>
<keyword id="KW-0963">Cytoplasm</keyword>
<keyword id="KW-0484">Methanogenesis</keyword>
<keyword id="KW-0554">One-carbon metabolism</keyword>
<keyword id="KW-1185">Reference proteome</keyword>
<keyword id="KW-0808">Transferase</keyword>
<sequence length="301" mass="32445">MEINGVYIEDTFAEAFPIWVSRVLITAATKKWAKIAATEATGFGCSVIMCPAEAGIEKYVPPSKTPDGRPGFIIQICHPKKSELEHQMLERLGQCVLTCPTTAIFDAMGDMADEQLKVGFKLKFFGDGYEKKDELYGRKVYKIPIMGGEFITEAKFGIKKGVAGGNFFIMADTNASALIAAEAAVNAIASVDGVITPFPGGVVASGSKVGASNPKYKFMVATTNHKMCPTLKGVVEDSEIPEDVNGVYEIVIDGVDEESVKEAMKQGILAATRVKGVKKITAGNYGGKLGKYQFNLRELFE</sequence>
<feature type="chain" id="PRO_0000138119" description="Formylmethanofuran--tetrahydromethanopterin formyltransferase">
    <location>
        <begin position="1"/>
        <end position="301"/>
    </location>
</feature>
<protein>
    <recommendedName>
        <fullName evidence="1">Formylmethanofuran--tetrahydromethanopterin formyltransferase</fullName>
        <shortName evidence="1">Ftr</shortName>
        <ecNumber evidence="1">2.3.1.101</ecNumber>
    </recommendedName>
    <alternativeName>
        <fullName evidence="1">H4MPT formyltransferase</fullName>
    </alternativeName>
</protein>
<name>FTR_METJA</name>
<proteinExistence type="inferred from homology"/>
<evidence type="ECO:0000255" key="1">
    <source>
        <dbReference type="HAMAP-Rule" id="MF_00579"/>
    </source>
</evidence>
<dbReference type="EC" id="2.3.1.101" evidence="1"/>
<dbReference type="EMBL" id="L77117">
    <property type="protein sequence ID" value="AAB98303.1"/>
    <property type="molecule type" value="Genomic_DNA"/>
</dbReference>
<dbReference type="PIR" id="G64339">
    <property type="entry name" value="G64339"/>
</dbReference>
<dbReference type="RefSeq" id="WP_010869816.1">
    <property type="nucleotide sequence ID" value="NC_000909.1"/>
</dbReference>
<dbReference type="SMR" id="Q57766"/>
<dbReference type="FunCoup" id="Q57766">
    <property type="interactions" value="91"/>
</dbReference>
<dbReference type="STRING" id="243232.MJ_0318"/>
<dbReference type="PaxDb" id="243232-MJ_0318"/>
<dbReference type="EnsemblBacteria" id="AAB98303">
    <property type="protein sequence ID" value="AAB98303"/>
    <property type="gene ID" value="MJ_0318"/>
</dbReference>
<dbReference type="GeneID" id="1451173"/>
<dbReference type="KEGG" id="mja:MJ_0318"/>
<dbReference type="eggNOG" id="arCOG02695">
    <property type="taxonomic scope" value="Archaea"/>
</dbReference>
<dbReference type="HOGENOM" id="CLU_081314_0_0_2"/>
<dbReference type="InParanoid" id="Q57766"/>
<dbReference type="OrthoDB" id="81373at2157"/>
<dbReference type="PhylomeDB" id="Q57766"/>
<dbReference type="UniPathway" id="UPA00640">
    <property type="reaction ID" value="UER00693"/>
</dbReference>
<dbReference type="Proteomes" id="UP000000805">
    <property type="component" value="Chromosome"/>
</dbReference>
<dbReference type="GO" id="GO:0005737">
    <property type="term" value="C:cytoplasm"/>
    <property type="evidence" value="ECO:0007669"/>
    <property type="project" value="UniProtKB-SubCell"/>
</dbReference>
<dbReference type="GO" id="GO:0030270">
    <property type="term" value="F:formylmethanofuran-tetrahydromethanopterin N-formyltransferase activity"/>
    <property type="evidence" value="ECO:0007669"/>
    <property type="project" value="UniProtKB-UniRule"/>
</dbReference>
<dbReference type="GO" id="GO:0019386">
    <property type="term" value="P:methanogenesis, from carbon dioxide"/>
    <property type="evidence" value="ECO:0007669"/>
    <property type="project" value="UniProtKB-UniRule"/>
</dbReference>
<dbReference type="GO" id="GO:0006730">
    <property type="term" value="P:one-carbon metabolic process"/>
    <property type="evidence" value="ECO:0007669"/>
    <property type="project" value="UniProtKB-UniRule"/>
</dbReference>
<dbReference type="Gene3D" id="3.30.70.520">
    <property type="match status" value="2"/>
</dbReference>
<dbReference type="HAMAP" id="MF_00579">
    <property type="entry name" value="FTR"/>
    <property type="match status" value="1"/>
</dbReference>
<dbReference type="InterPro" id="IPR014053">
    <property type="entry name" value="ForMFR_H4MPT_ForTrfase"/>
</dbReference>
<dbReference type="InterPro" id="IPR002770">
    <property type="entry name" value="ForMFR_H4MPT_ForTrfase_C"/>
</dbReference>
<dbReference type="InterPro" id="IPR023447">
    <property type="entry name" value="ForMFR_H4MPT_ForTrfase_fd-like"/>
</dbReference>
<dbReference type="InterPro" id="IPR022667">
    <property type="entry name" value="ForMFR_H4MPT_ForTrfase_N"/>
</dbReference>
<dbReference type="NCBIfam" id="TIGR03119">
    <property type="entry name" value="one_C_fhcD"/>
    <property type="match status" value="1"/>
</dbReference>
<dbReference type="NCBIfam" id="NF002554">
    <property type="entry name" value="PRK02114.1"/>
    <property type="match status" value="1"/>
</dbReference>
<dbReference type="Pfam" id="PF01913">
    <property type="entry name" value="FTR"/>
    <property type="match status" value="1"/>
</dbReference>
<dbReference type="Pfam" id="PF02741">
    <property type="entry name" value="FTR_C"/>
    <property type="match status" value="1"/>
</dbReference>
<dbReference type="PIRSF" id="PIRSF006414">
    <property type="entry name" value="Ftr_formyl_trnsf"/>
    <property type="match status" value="1"/>
</dbReference>
<dbReference type="SUPFAM" id="SSF55112">
    <property type="entry name" value="Formylmethanofuran:tetrahydromethanopterin formyltransferase"/>
    <property type="match status" value="2"/>
</dbReference>
<organism>
    <name type="scientific">Methanocaldococcus jannaschii (strain ATCC 43067 / DSM 2661 / JAL-1 / JCM 10045 / NBRC 100440)</name>
    <name type="common">Methanococcus jannaschii</name>
    <dbReference type="NCBI Taxonomy" id="243232"/>
    <lineage>
        <taxon>Archaea</taxon>
        <taxon>Methanobacteriati</taxon>
        <taxon>Methanobacteriota</taxon>
        <taxon>Methanomada group</taxon>
        <taxon>Methanococci</taxon>
        <taxon>Methanococcales</taxon>
        <taxon>Methanocaldococcaceae</taxon>
        <taxon>Methanocaldococcus</taxon>
    </lineage>
</organism>
<gene>
    <name evidence="1" type="primary">ftr</name>
    <name type="ordered locus">MJ0318</name>
</gene>
<comment type="function">
    <text evidence="1">Catalyzes the reversible transfer of a formyl group from formylmethanofuran (formyl-MFR) to tetrahydromethanopterin (H(4)MPT) to produce 5-formyl tetrahydromethanopterin (5-formyl-H(4)MPT) and methanofuran (MFR).</text>
</comment>
<comment type="catalytic activity">
    <reaction evidence="1">
        <text>N-formylmethanofuran + 5,6,7,8-tetrahydromethanopterin + H(+) = N(5)-formyl-5,6,7,8-tetrahydromethanopterin + methanofuran</text>
        <dbReference type="Rhea" id="RHEA:18061"/>
        <dbReference type="ChEBI" id="CHEBI:15378"/>
        <dbReference type="ChEBI" id="CHEBI:57727"/>
        <dbReference type="ChEBI" id="CHEBI:58018"/>
        <dbReference type="ChEBI" id="CHEBI:58103"/>
        <dbReference type="ChEBI" id="CHEBI:58151"/>
        <dbReference type="EC" id="2.3.1.101"/>
    </reaction>
</comment>
<comment type="pathway">
    <text evidence="1">One-carbon metabolism; methanogenesis from CO(2); 5,10-methenyl-5,6,7,8-tetrahydromethanopterin from CO(2): step 2/3.</text>
</comment>
<comment type="subunit">
    <text evidence="1">Homotetramer.</text>
</comment>
<comment type="subcellular location">
    <subcellularLocation>
        <location evidence="1">Cytoplasm</location>
    </subcellularLocation>
</comment>
<comment type="similarity">
    <text evidence="1">Belongs to the FTR family.</text>
</comment>